<dbReference type="EC" id="2.1.1.277"/>
<dbReference type="EMBL" id="HM242244">
    <property type="protein sequence ID" value="ADI87449.1"/>
    <property type="molecule type" value="mRNA"/>
</dbReference>
<dbReference type="SMR" id="D9J0Z7"/>
<dbReference type="FunCoup" id="D9J0Z7">
    <property type="interactions" value="14"/>
</dbReference>
<dbReference type="STRING" id="4577.D9J0Z7"/>
<dbReference type="PaxDb" id="4577-GRMZM2G039993_P01"/>
<dbReference type="eggNOG" id="ENOG502QQVK">
    <property type="taxonomic scope" value="Eukaryota"/>
</dbReference>
<dbReference type="InParanoid" id="D9J0Z7"/>
<dbReference type="BRENDA" id="2.1.1.277">
    <property type="organism ID" value="6752"/>
</dbReference>
<dbReference type="SABIO-RK" id="D9J0Z7"/>
<dbReference type="Proteomes" id="UP000007305">
    <property type="component" value="Unplaced"/>
</dbReference>
<dbReference type="ExpressionAtlas" id="D9J0Z7">
    <property type="expression patterns" value="baseline and differential"/>
</dbReference>
<dbReference type="GO" id="GO:0008757">
    <property type="term" value="F:S-adenosylmethionine-dependent methyltransferase activity"/>
    <property type="evidence" value="ECO:0000318"/>
    <property type="project" value="GO_Central"/>
</dbReference>
<dbReference type="GO" id="GO:0006952">
    <property type="term" value="P:defense response"/>
    <property type="evidence" value="ECO:0007669"/>
    <property type="project" value="UniProtKB-KW"/>
</dbReference>
<dbReference type="GO" id="GO:0032259">
    <property type="term" value="P:methylation"/>
    <property type="evidence" value="ECO:0000318"/>
    <property type="project" value="GO_Central"/>
</dbReference>
<dbReference type="Gene3D" id="1.10.1200.270">
    <property type="entry name" value="Methyltransferase, alpha-helical capping domain"/>
    <property type="match status" value="1"/>
</dbReference>
<dbReference type="Gene3D" id="3.40.50.150">
    <property type="entry name" value="Vaccinia Virus protein VP39"/>
    <property type="match status" value="1"/>
</dbReference>
<dbReference type="InterPro" id="IPR005299">
    <property type="entry name" value="MeTrfase_7"/>
</dbReference>
<dbReference type="InterPro" id="IPR042086">
    <property type="entry name" value="MeTrfase_capping"/>
</dbReference>
<dbReference type="InterPro" id="IPR029063">
    <property type="entry name" value="SAM-dependent_MTases_sf"/>
</dbReference>
<dbReference type="PANTHER" id="PTHR31009">
    <property type="entry name" value="S-ADENOSYL-L-METHIONINE:CARBOXYL METHYLTRANSFERASE FAMILY PROTEIN"/>
    <property type="match status" value="1"/>
</dbReference>
<dbReference type="Pfam" id="PF03492">
    <property type="entry name" value="Methyltransf_7"/>
    <property type="match status" value="1"/>
</dbReference>
<dbReference type="SUPFAM" id="SSF53335">
    <property type="entry name" value="S-adenosyl-L-methionine-dependent methyltransferases"/>
    <property type="match status" value="1"/>
</dbReference>
<keyword id="KW-0460">Magnesium</keyword>
<keyword id="KW-0479">Metal-binding</keyword>
<keyword id="KW-0489">Methyltransferase</keyword>
<keyword id="KW-0611">Plant defense</keyword>
<keyword id="KW-1185">Reference proteome</keyword>
<keyword id="KW-0949">S-adenosyl-L-methionine</keyword>
<keyword id="KW-0808">Transferase</keyword>
<organism>
    <name type="scientific">Zea mays</name>
    <name type="common">Maize</name>
    <dbReference type="NCBI Taxonomy" id="4577"/>
    <lineage>
        <taxon>Eukaryota</taxon>
        <taxon>Viridiplantae</taxon>
        <taxon>Streptophyta</taxon>
        <taxon>Embryophyta</taxon>
        <taxon>Tracheophyta</taxon>
        <taxon>Spermatophyta</taxon>
        <taxon>Magnoliopsida</taxon>
        <taxon>Liliopsida</taxon>
        <taxon>Poales</taxon>
        <taxon>Poaceae</taxon>
        <taxon>PACMAD clade</taxon>
        <taxon>Panicoideae</taxon>
        <taxon>Andropogonodae</taxon>
        <taxon>Andropogoneae</taxon>
        <taxon>Tripsacinae</taxon>
        <taxon>Zea</taxon>
    </lineage>
</organism>
<reference key="1">
    <citation type="journal article" date="2010" name="Plant Physiol.">
        <title>Herbivore-induced SABATH methyltransferases of maize that methylate anthranilic acid using s-adenosyl-L-methionine.</title>
        <authorList>
            <person name="Kollner T.G."/>
            <person name="Lenk C."/>
            <person name="Zhao N."/>
            <person name="Seidl-Adams I."/>
            <person name="Gershenzon J."/>
            <person name="Chen F."/>
            <person name="Degenhardt J."/>
        </authorList>
    </citation>
    <scope>NUCLEOTIDE SEQUENCE [MRNA]</scope>
    <scope>FUNCTION</scope>
    <scope>CATALYTIC ACTIVITY</scope>
    <scope>BIOPHYSICOCHEMICAL PROPERTIES</scope>
    <scope>INDUCTION BY HERBIVORY; JASMONIC ACID AND SALICYLIC ACID</scope>
    <scope>3D-STRUCTURE MODELING</scope>
    <scope>MUTAGENESIS OF GLN-167 AND TYR-246</scope>
    <source>
        <strain>cv. Delprim</strain>
    </source>
</reference>
<accession>D9J0Z7</accession>
<proteinExistence type="evidence at protein level"/>
<sequence>MPMRIERDLHMAIGNGETSYTKNSRIQEKAMFQMKSVLEEATRAVCTTLLPQTMVVADLGCSSGPNTLRFVTEVTRIIAHHCKLEHNRRHDHLPQLQFFLNDLPGNDFNNLFQLIEQFNKSSTTHKGDAATEALQPPCYISGLPGSYYTRIFPSESVHLFHSLFCLQWRSQAPEQLKGTQKSCLDIYITKTMSPSMVKLFQQQFQKDFSLFLRLRYEELVSGGQMVLTFIGRKHEDVFTGESNHLYGLLAQSLKSLVDEGLVEKEKLESFYLPIYSPSVGEVEAIVKQLGLFNMNHVKVFEINWDPYDDSEGDDVHNSIESGENVAKCLRAVMEPLVASQFGERILDELFKEYARRVAKHLENEKTKHAVLVLSIEKAIIHV</sequence>
<comment type="function">
    <text evidence="4">Methyltransferase involved in the biosynthesis of methyl anthranilate in response to stresses. Utilizes anthranilic acid as substrate, but not salicylic acid. Produces exclusively the O-methyl ester.</text>
</comment>
<comment type="catalytic activity">
    <reaction evidence="4">
        <text>anthranilate + S-adenosyl-L-methionine = O-methyl anthranilate + S-adenosyl-L-homocysteine</text>
        <dbReference type="Rhea" id="RHEA:36103"/>
        <dbReference type="ChEBI" id="CHEBI:16567"/>
        <dbReference type="ChEBI" id="CHEBI:57856"/>
        <dbReference type="ChEBI" id="CHEBI:59789"/>
        <dbReference type="ChEBI" id="CHEBI:73244"/>
        <dbReference type="EC" id="2.1.1.277"/>
    </reaction>
</comment>
<comment type="biophysicochemical properties">
    <kinetics>
        <KM evidence="4">641 uM for anthranilic acid</KM>
        <KM evidence="4">2025 uM for benzoic acid</KM>
        <KM evidence="4">79 uM for S-adenosyl-L-methionine</KM>
        <text>kcat is 0.45 sec(-1) with anthranilic acid as substrate. kcat is 0.04 sec(-1) with benzoic acid as substrate.</text>
    </kinetics>
</comment>
<comment type="induction">
    <text evidence="4">Up-regulated by herbivory and jasmonic acid, but not by salicylic acid.</text>
</comment>
<comment type="miscellaneous">
    <text evidence="6">Because cv. Delprim is a hybrid line, AAMT1 and AAMT1I are likely alleles of one single locus. However, AAMT1I showed no enzymatic activity with all tested substrates (PubMed:20519632).</text>
</comment>
<comment type="similarity">
    <text evidence="5">Belongs to the methyltransferase superfamily. Type-7 methyltransferase family. SABATH subfamily.</text>
</comment>
<protein>
    <recommendedName>
        <fullName>Anthranilate O-methyltransferase 1</fullName>
        <ecNumber>2.1.1.277</ecNumber>
    </recommendedName>
    <alternativeName>
        <fullName>Anthranilic acid methyltransferase 1</fullName>
    </alternativeName>
    <alternativeName>
        <fullName>O-methyltransferase 1</fullName>
    </alternativeName>
</protein>
<feature type="chain" id="PRO_0000423910" description="Anthranilate O-methyltransferase 1">
    <location>
        <begin position="1"/>
        <end position="382"/>
    </location>
</feature>
<feature type="binding site" evidence="2">
    <location>
        <position position="20"/>
    </location>
    <ligand>
        <name>S-adenosyl-L-homocysteine</name>
        <dbReference type="ChEBI" id="CHEBI:57856"/>
    </ligand>
</feature>
<feature type="binding site" evidence="2">
    <location>
        <position position="27"/>
    </location>
    <ligand>
        <name>anthranilate</name>
        <dbReference type="ChEBI" id="CHEBI:16567"/>
    </ligand>
</feature>
<feature type="binding site" evidence="2">
    <location>
        <position position="61"/>
    </location>
    <ligand>
        <name>S-adenosyl-L-homocysteine</name>
        <dbReference type="ChEBI" id="CHEBI:57856"/>
    </ligand>
</feature>
<feature type="binding site" evidence="2">
    <location>
        <position position="66"/>
    </location>
    <ligand>
        <name>S-adenosyl-L-homocysteine</name>
        <dbReference type="ChEBI" id="CHEBI:57856"/>
    </ligand>
</feature>
<feature type="binding site" evidence="2">
    <location>
        <position position="102"/>
    </location>
    <ligand>
        <name>S-adenosyl-L-homocysteine</name>
        <dbReference type="ChEBI" id="CHEBI:57856"/>
    </ligand>
</feature>
<feature type="binding site" evidence="1">
    <location>
        <position position="103"/>
    </location>
    <ligand>
        <name>S-adenosyl-L-homocysteine</name>
        <dbReference type="ChEBI" id="CHEBI:57856"/>
    </ligand>
</feature>
<feature type="binding site" evidence="2">
    <location>
        <position position="146"/>
    </location>
    <ligand>
        <name>S-adenosyl-L-homocysteine</name>
        <dbReference type="ChEBI" id="CHEBI:57856"/>
    </ligand>
</feature>
<feature type="binding site" evidence="2">
    <location>
        <position position="147"/>
    </location>
    <ligand>
        <name>S-adenosyl-L-homocysteine</name>
        <dbReference type="ChEBI" id="CHEBI:57856"/>
    </ligand>
</feature>
<feature type="binding site" evidence="2">
    <location>
        <position position="168"/>
    </location>
    <ligand>
        <name>anthranilate</name>
        <dbReference type="ChEBI" id="CHEBI:16567"/>
    </ligand>
</feature>
<feature type="binding site" evidence="3">
    <location>
        <position position="268"/>
    </location>
    <ligand>
        <name>Mg(2+)</name>
        <dbReference type="ChEBI" id="CHEBI:18420"/>
    </ligand>
</feature>
<feature type="binding site" evidence="3">
    <location>
        <position position="270"/>
    </location>
    <ligand>
        <name>Mg(2+)</name>
        <dbReference type="ChEBI" id="CHEBI:18420"/>
    </ligand>
</feature>
<feature type="mutagenesis site" description="Increased activity with benzoic acid as substrate, but no activity with salicylic acid as substrate." evidence="4">
    <original>Q</original>
    <variation>H</variation>
    <location>
        <position position="167"/>
    </location>
</feature>
<feature type="mutagenesis site" description="No effect on substrate specificity." evidence="4">
    <original>Q</original>
    <variation>M</variation>
    <location>
        <position position="167"/>
    </location>
</feature>
<feature type="mutagenesis site" description="Decreased substrate specificity and increased activity with benzoic acid and salicylic acid as substrates." evidence="4">
    <original>Y</original>
    <variation>W</variation>
    <location>
        <position position="246"/>
    </location>
</feature>
<evidence type="ECO:0000250" key="1">
    <source>
        <dbReference type="UniProtKB" id="A0A6C0WW36"/>
    </source>
</evidence>
<evidence type="ECO:0000250" key="2">
    <source>
        <dbReference type="UniProtKB" id="B2KPR3"/>
    </source>
</evidence>
<evidence type="ECO:0000250" key="3">
    <source>
        <dbReference type="UniProtKB" id="Q9FLN8"/>
    </source>
</evidence>
<evidence type="ECO:0000269" key="4">
    <source>
    </source>
</evidence>
<evidence type="ECO:0000305" key="5"/>
<evidence type="ECO:0000305" key="6">
    <source>
    </source>
</evidence>
<gene>
    <name type="primary">AAMT1</name>
    <name type="synonym">OMT1</name>
</gene>
<name>AAMT1_MAIZE</name>